<organism>
    <name type="scientific">Streptococcus pyogenes serotype M3 (strain ATCC BAA-595 / MGAS315)</name>
    <dbReference type="NCBI Taxonomy" id="198466"/>
    <lineage>
        <taxon>Bacteria</taxon>
        <taxon>Bacillati</taxon>
        <taxon>Bacillota</taxon>
        <taxon>Bacilli</taxon>
        <taxon>Lactobacillales</taxon>
        <taxon>Streptococcaceae</taxon>
        <taxon>Streptococcus</taxon>
    </lineage>
</organism>
<comment type="function">
    <text evidence="1">Ligates lysine onto the cytidine present at position 34 of the AUA codon-specific tRNA(Ile) that contains the anticodon CAU, in an ATP-dependent manner. Cytidine is converted to lysidine, thus changing the amino acid specificity of the tRNA from methionine to isoleucine.</text>
</comment>
<comment type="catalytic activity">
    <reaction evidence="1">
        <text>cytidine(34) in tRNA(Ile2) + L-lysine + ATP = lysidine(34) in tRNA(Ile2) + AMP + diphosphate + H(+)</text>
        <dbReference type="Rhea" id="RHEA:43744"/>
        <dbReference type="Rhea" id="RHEA-COMP:10625"/>
        <dbReference type="Rhea" id="RHEA-COMP:10670"/>
        <dbReference type="ChEBI" id="CHEBI:15378"/>
        <dbReference type="ChEBI" id="CHEBI:30616"/>
        <dbReference type="ChEBI" id="CHEBI:32551"/>
        <dbReference type="ChEBI" id="CHEBI:33019"/>
        <dbReference type="ChEBI" id="CHEBI:82748"/>
        <dbReference type="ChEBI" id="CHEBI:83665"/>
        <dbReference type="ChEBI" id="CHEBI:456215"/>
        <dbReference type="EC" id="6.3.4.19"/>
    </reaction>
</comment>
<comment type="subcellular location">
    <subcellularLocation>
        <location evidence="1">Cytoplasm</location>
    </subcellularLocation>
</comment>
<comment type="domain">
    <text>The N-terminal region contains the highly conserved SGGXDS motif, predicted to be a P-loop motif involved in ATP binding.</text>
</comment>
<comment type="similarity">
    <text evidence="1">Belongs to the tRNA(Ile)-lysidine synthase family.</text>
</comment>
<comment type="sequence caution" evidence="2">
    <conflict type="erroneous initiation">
        <sequence resource="EMBL-CDS" id="AAM78617"/>
    </conflict>
</comment>
<keyword id="KW-0067">ATP-binding</keyword>
<keyword id="KW-0963">Cytoplasm</keyword>
<keyword id="KW-0436">Ligase</keyword>
<keyword id="KW-0547">Nucleotide-binding</keyword>
<keyword id="KW-0819">tRNA processing</keyword>
<gene>
    <name evidence="1" type="primary">tilS</name>
    <name type="ordered locus">SpyM3_0010</name>
</gene>
<dbReference type="EC" id="6.3.4.19" evidence="1"/>
<dbReference type="EMBL" id="AE014074">
    <property type="protein sequence ID" value="AAM78617.1"/>
    <property type="status" value="ALT_INIT"/>
    <property type="molecule type" value="Genomic_DNA"/>
</dbReference>
<dbReference type="RefSeq" id="WP_011106565.1">
    <property type="nucleotide sequence ID" value="NC_004070.1"/>
</dbReference>
<dbReference type="SMR" id="P0DG00"/>
<dbReference type="GeneID" id="69899962"/>
<dbReference type="KEGG" id="spg:SpyM3_0010"/>
<dbReference type="HOGENOM" id="CLU_018869_0_2_9"/>
<dbReference type="Proteomes" id="UP000000564">
    <property type="component" value="Chromosome"/>
</dbReference>
<dbReference type="GO" id="GO:0005737">
    <property type="term" value="C:cytoplasm"/>
    <property type="evidence" value="ECO:0007669"/>
    <property type="project" value="UniProtKB-SubCell"/>
</dbReference>
<dbReference type="GO" id="GO:0005524">
    <property type="term" value="F:ATP binding"/>
    <property type="evidence" value="ECO:0007669"/>
    <property type="project" value="UniProtKB-UniRule"/>
</dbReference>
<dbReference type="GO" id="GO:0032267">
    <property type="term" value="F:tRNA(Ile)-lysidine synthase activity"/>
    <property type="evidence" value="ECO:0007669"/>
    <property type="project" value="UniProtKB-EC"/>
</dbReference>
<dbReference type="GO" id="GO:0006400">
    <property type="term" value="P:tRNA modification"/>
    <property type="evidence" value="ECO:0007669"/>
    <property type="project" value="UniProtKB-UniRule"/>
</dbReference>
<dbReference type="CDD" id="cd01992">
    <property type="entry name" value="TilS_N"/>
    <property type="match status" value="1"/>
</dbReference>
<dbReference type="Gene3D" id="3.40.50.620">
    <property type="entry name" value="HUPs"/>
    <property type="match status" value="1"/>
</dbReference>
<dbReference type="HAMAP" id="MF_01161">
    <property type="entry name" value="tRNA_Ile_lys_synt"/>
    <property type="match status" value="1"/>
</dbReference>
<dbReference type="InterPro" id="IPR012796">
    <property type="entry name" value="Lysidine-tRNA-synth_C"/>
</dbReference>
<dbReference type="InterPro" id="IPR014729">
    <property type="entry name" value="Rossmann-like_a/b/a_fold"/>
</dbReference>
<dbReference type="InterPro" id="IPR011063">
    <property type="entry name" value="TilS/TtcA_N"/>
</dbReference>
<dbReference type="InterPro" id="IPR012094">
    <property type="entry name" value="tRNA_Ile_lys_synt"/>
</dbReference>
<dbReference type="InterPro" id="IPR012795">
    <property type="entry name" value="tRNA_Ile_lys_synt_N"/>
</dbReference>
<dbReference type="NCBIfam" id="TIGR02433">
    <property type="entry name" value="lysidine_TilS_C"/>
    <property type="match status" value="1"/>
</dbReference>
<dbReference type="NCBIfam" id="TIGR02432">
    <property type="entry name" value="lysidine_TilS_N"/>
    <property type="match status" value="1"/>
</dbReference>
<dbReference type="PANTHER" id="PTHR43033">
    <property type="entry name" value="TRNA(ILE)-LYSIDINE SYNTHASE-RELATED"/>
    <property type="match status" value="1"/>
</dbReference>
<dbReference type="PANTHER" id="PTHR43033:SF1">
    <property type="entry name" value="TRNA(ILE)-LYSIDINE SYNTHASE-RELATED"/>
    <property type="match status" value="1"/>
</dbReference>
<dbReference type="Pfam" id="PF01171">
    <property type="entry name" value="ATP_bind_3"/>
    <property type="match status" value="1"/>
</dbReference>
<dbReference type="SUPFAM" id="SSF52402">
    <property type="entry name" value="Adenine nucleotide alpha hydrolases-like"/>
    <property type="match status" value="1"/>
</dbReference>
<accession>P0DG00</accession>
<accession>Q879R7</accession>
<accession>Q8K8Z3</accession>
<sequence length="428" mass="50472">MMTYQEIFNEIKNKAYFKNHRHVLIAVSGGVDSMNLLHFLYLFQDKLKIRIGIAHVNHKQRSESDSEEAYLKCWAKKHDIPIYVSNFEGIFSEKAARDWRYAFFKSIMLKNNYSALVTAHHSDDQAETILMRLIRGSRLRHLSGIKSVQPFANGQLIRPFLTFSKKDLPEIFHFEDSSNRELSFLRNRVRNNYLPLLKQENPRFIQGLNQLALENSLLFQAFKELTNHITTTDLTEFNEQSKSIQYFLLQDYLEGFPDLDLKKSQFTQLLQIIQTAKQGYYYLKKDYYIFIDKFSFKITKIVPKTELVKDEKMLEYDSNLCYRDYCFSFMPKSNEDQGQVSIPLFSLSSIKLRSRQSGDYISFGHFSKKIRRLFIDEKFTIAERQNAIIGEQDEQIIFVLIGNKTYLRKACKHDIMLAKLYIDKLEKG</sequence>
<name>TILS_STRP3</name>
<protein>
    <recommendedName>
        <fullName evidence="1">tRNA(Ile)-lysidine synthase</fullName>
        <ecNumber evidence="1">6.3.4.19</ecNumber>
    </recommendedName>
    <alternativeName>
        <fullName evidence="1">tRNA(Ile)-2-lysyl-cytidine synthase</fullName>
    </alternativeName>
    <alternativeName>
        <fullName evidence="1">tRNA(Ile)-lysidine synthetase</fullName>
    </alternativeName>
</protein>
<reference key="1">
    <citation type="journal article" date="2002" name="Proc. Natl. Acad. Sci. U.S.A.">
        <title>Genome sequence of a serotype M3 strain of group A Streptococcus: phage-encoded toxins, the high-virulence phenotype, and clone emergence.</title>
        <authorList>
            <person name="Beres S.B."/>
            <person name="Sylva G.L."/>
            <person name="Barbian K.D."/>
            <person name="Lei B."/>
            <person name="Hoff J.S."/>
            <person name="Mammarella N.D."/>
            <person name="Liu M.-Y."/>
            <person name="Smoot J.C."/>
            <person name="Porcella S.F."/>
            <person name="Parkins L.D."/>
            <person name="Campbell D.S."/>
            <person name="Smith T.M."/>
            <person name="McCormick J.K."/>
            <person name="Leung D.Y.M."/>
            <person name="Schlievert P.M."/>
            <person name="Musser J.M."/>
        </authorList>
    </citation>
    <scope>NUCLEOTIDE SEQUENCE [LARGE SCALE GENOMIC DNA]</scope>
    <source>
        <strain>ATCC BAA-595 / MGAS315</strain>
    </source>
</reference>
<evidence type="ECO:0000255" key="1">
    <source>
        <dbReference type="HAMAP-Rule" id="MF_01161"/>
    </source>
</evidence>
<evidence type="ECO:0000305" key="2"/>
<proteinExistence type="inferred from homology"/>
<feature type="chain" id="PRO_0000181781" description="tRNA(Ile)-lysidine synthase">
    <location>
        <begin position="1"/>
        <end position="428"/>
    </location>
</feature>
<feature type="binding site" evidence="1">
    <location>
        <begin position="28"/>
        <end position="33"/>
    </location>
    <ligand>
        <name>ATP</name>
        <dbReference type="ChEBI" id="CHEBI:30616"/>
    </ligand>
</feature>